<protein>
    <recommendedName>
        <fullName evidence="1">Nicotinate phosphoribosyltransferase</fullName>
        <shortName evidence="1">NAPRTase</shortName>
        <ecNumber evidence="1">6.3.4.21</ecNumber>
    </recommendedName>
</protein>
<comment type="function">
    <text evidence="1">Catalyzes the synthesis of beta-nicotinate D-ribonucleotide from nicotinate and 5-phospho-D-ribose 1-phosphate at the expense of ATP.</text>
</comment>
<comment type="catalytic activity">
    <reaction evidence="1">
        <text>nicotinate + 5-phospho-alpha-D-ribose 1-diphosphate + ATP + H2O = nicotinate beta-D-ribonucleotide + ADP + phosphate + diphosphate</text>
        <dbReference type="Rhea" id="RHEA:36163"/>
        <dbReference type="ChEBI" id="CHEBI:15377"/>
        <dbReference type="ChEBI" id="CHEBI:30616"/>
        <dbReference type="ChEBI" id="CHEBI:32544"/>
        <dbReference type="ChEBI" id="CHEBI:33019"/>
        <dbReference type="ChEBI" id="CHEBI:43474"/>
        <dbReference type="ChEBI" id="CHEBI:57502"/>
        <dbReference type="ChEBI" id="CHEBI:58017"/>
        <dbReference type="ChEBI" id="CHEBI:456216"/>
        <dbReference type="EC" id="6.3.4.21"/>
    </reaction>
</comment>
<comment type="pathway">
    <text evidence="1">Cofactor biosynthesis; NAD(+) biosynthesis; nicotinate D-ribonucleotide from nicotinate: step 1/1.</text>
</comment>
<comment type="PTM">
    <text evidence="1">Transiently phosphorylated on a His residue during the reaction cycle. Phosphorylation strongly increases the affinity for substrates and increases the rate of nicotinate D-ribonucleotide production. Dephosphorylation regenerates the low-affinity form of the enzyme, leading to product release.</text>
</comment>
<comment type="similarity">
    <text evidence="1">Belongs to the NAPRTase family.</text>
</comment>
<organism>
    <name type="scientific">Escherichia coli O45:K1 (strain S88 / ExPEC)</name>
    <dbReference type="NCBI Taxonomy" id="585035"/>
    <lineage>
        <taxon>Bacteria</taxon>
        <taxon>Pseudomonadati</taxon>
        <taxon>Pseudomonadota</taxon>
        <taxon>Gammaproteobacteria</taxon>
        <taxon>Enterobacterales</taxon>
        <taxon>Enterobacteriaceae</taxon>
        <taxon>Escherichia</taxon>
    </lineage>
</organism>
<sequence>MTQFASPVLHSLLDTDAYKLHMQQAVFHHYYDVHVAAEFRCRGDDLLGIYADAIREQVQAMQHLRLQDDEYQWLSALPFFKADYLNWLREFRFNPEQVTVSNDNGKLDIRLSGPWREVILWEVPLLAVISEMVHRYRSPQADVAQALDTLENKLVDFSALTAGLDMSRFHLMDFGTRRRFSREVQETIVKRLQQESWFVGTSNYDLARRLSLTPMGTQAHEWFQAHQQISPDLANSQRAALAAWLEEYPDQLGIALTDCITMDAFLRDFGVEFASRYQGLRHDSGDPVEWGEKAIAHYEKLGIDPQSKTLVFSDNLDLRKAVELYRHFSSRVQLSFGIGTRLTCDIPQVKPLNIVIKLVECNGKPVAKLSDSPGKTICHDKAFVRALRKAFDLPHIKKAS</sequence>
<reference key="1">
    <citation type="journal article" date="2009" name="PLoS Genet.">
        <title>Organised genome dynamics in the Escherichia coli species results in highly diverse adaptive paths.</title>
        <authorList>
            <person name="Touchon M."/>
            <person name="Hoede C."/>
            <person name="Tenaillon O."/>
            <person name="Barbe V."/>
            <person name="Baeriswyl S."/>
            <person name="Bidet P."/>
            <person name="Bingen E."/>
            <person name="Bonacorsi S."/>
            <person name="Bouchier C."/>
            <person name="Bouvet O."/>
            <person name="Calteau A."/>
            <person name="Chiapello H."/>
            <person name="Clermont O."/>
            <person name="Cruveiller S."/>
            <person name="Danchin A."/>
            <person name="Diard M."/>
            <person name="Dossat C."/>
            <person name="Karoui M.E."/>
            <person name="Frapy E."/>
            <person name="Garry L."/>
            <person name="Ghigo J.M."/>
            <person name="Gilles A.M."/>
            <person name="Johnson J."/>
            <person name="Le Bouguenec C."/>
            <person name="Lescat M."/>
            <person name="Mangenot S."/>
            <person name="Martinez-Jehanne V."/>
            <person name="Matic I."/>
            <person name="Nassif X."/>
            <person name="Oztas S."/>
            <person name="Petit M.A."/>
            <person name="Pichon C."/>
            <person name="Rouy Z."/>
            <person name="Ruf C.S."/>
            <person name="Schneider D."/>
            <person name="Tourret J."/>
            <person name="Vacherie B."/>
            <person name="Vallenet D."/>
            <person name="Medigue C."/>
            <person name="Rocha E.P.C."/>
            <person name="Denamur E."/>
        </authorList>
    </citation>
    <scope>NUCLEOTIDE SEQUENCE [LARGE SCALE GENOMIC DNA]</scope>
    <source>
        <strain>S88 / ExPEC</strain>
    </source>
</reference>
<feature type="chain" id="PRO_1000129465" description="Nicotinate phosphoribosyltransferase">
    <location>
        <begin position="1"/>
        <end position="400"/>
    </location>
</feature>
<feature type="modified residue" description="Phosphohistidine; by autocatalysis" evidence="1">
    <location>
        <position position="220"/>
    </location>
</feature>
<gene>
    <name evidence="1" type="primary">pncB</name>
    <name type="ordered locus">ECS88_0959</name>
</gene>
<proteinExistence type="inferred from homology"/>
<accession>B7MHP0</accession>
<dbReference type="EC" id="6.3.4.21" evidence="1"/>
<dbReference type="EMBL" id="CU928161">
    <property type="protein sequence ID" value="CAR02291.1"/>
    <property type="molecule type" value="Genomic_DNA"/>
</dbReference>
<dbReference type="RefSeq" id="WP_001298298.1">
    <property type="nucleotide sequence ID" value="NC_011742.1"/>
</dbReference>
<dbReference type="SMR" id="B7MHP0"/>
<dbReference type="KEGG" id="ecz:ECS88_0959"/>
<dbReference type="HOGENOM" id="CLU_030991_1_0_6"/>
<dbReference type="UniPathway" id="UPA00253">
    <property type="reaction ID" value="UER00457"/>
</dbReference>
<dbReference type="Proteomes" id="UP000000747">
    <property type="component" value="Chromosome"/>
</dbReference>
<dbReference type="GO" id="GO:0005829">
    <property type="term" value="C:cytosol"/>
    <property type="evidence" value="ECO:0007669"/>
    <property type="project" value="TreeGrafter"/>
</dbReference>
<dbReference type="GO" id="GO:0004516">
    <property type="term" value="F:nicotinate phosphoribosyltransferase activity"/>
    <property type="evidence" value="ECO:0007669"/>
    <property type="project" value="UniProtKB-UniRule"/>
</dbReference>
<dbReference type="GO" id="GO:0034355">
    <property type="term" value="P:NAD biosynthetic process via the salvage pathway"/>
    <property type="evidence" value="ECO:0007669"/>
    <property type="project" value="TreeGrafter"/>
</dbReference>
<dbReference type="CDD" id="cd01401">
    <property type="entry name" value="PncB_like"/>
    <property type="match status" value="1"/>
</dbReference>
<dbReference type="FunFam" id="3.20.140.10:FF:000001">
    <property type="entry name" value="Nicotinate phosphoribosyltransferase"/>
    <property type="match status" value="1"/>
</dbReference>
<dbReference type="Gene3D" id="3.20.140.10">
    <property type="entry name" value="nicotinate phosphoribosyltransferase"/>
    <property type="match status" value="1"/>
</dbReference>
<dbReference type="HAMAP" id="MF_00570">
    <property type="entry name" value="NAPRTase"/>
    <property type="match status" value="1"/>
</dbReference>
<dbReference type="InterPro" id="IPR041525">
    <property type="entry name" value="N/Namide_PRibTrfase"/>
</dbReference>
<dbReference type="InterPro" id="IPR040727">
    <property type="entry name" value="NAPRTase_N"/>
</dbReference>
<dbReference type="InterPro" id="IPR006406">
    <property type="entry name" value="Nic_PRibTrfase"/>
</dbReference>
<dbReference type="InterPro" id="IPR007229">
    <property type="entry name" value="Nic_PRibTrfase-Fam"/>
</dbReference>
<dbReference type="InterPro" id="IPR036068">
    <property type="entry name" value="Nicotinate_pribotase-like_C"/>
</dbReference>
<dbReference type="NCBIfam" id="TIGR01514">
    <property type="entry name" value="NAPRTase"/>
    <property type="match status" value="1"/>
</dbReference>
<dbReference type="NCBIfam" id="NF003704">
    <property type="entry name" value="PRK05321.1"/>
    <property type="match status" value="1"/>
</dbReference>
<dbReference type="PANTHER" id="PTHR11098">
    <property type="entry name" value="NICOTINATE PHOSPHORIBOSYLTRANSFERASE"/>
    <property type="match status" value="1"/>
</dbReference>
<dbReference type="PANTHER" id="PTHR11098:SF1">
    <property type="entry name" value="NICOTINATE PHOSPHORIBOSYLTRANSFERASE"/>
    <property type="match status" value="1"/>
</dbReference>
<dbReference type="Pfam" id="PF04095">
    <property type="entry name" value="NAPRTase"/>
    <property type="match status" value="1"/>
</dbReference>
<dbReference type="Pfam" id="PF17767">
    <property type="entry name" value="NAPRTase_N"/>
    <property type="match status" value="1"/>
</dbReference>
<dbReference type="PIRSF" id="PIRSF000484">
    <property type="entry name" value="NAPRT"/>
    <property type="match status" value="1"/>
</dbReference>
<dbReference type="SUPFAM" id="SSF51690">
    <property type="entry name" value="Nicotinate/Quinolinate PRTase C-terminal domain-like"/>
    <property type="match status" value="1"/>
</dbReference>
<dbReference type="SUPFAM" id="SSF54675">
    <property type="entry name" value="Nicotinate/Quinolinate PRTase N-terminal domain-like"/>
    <property type="match status" value="1"/>
</dbReference>
<name>PNCB_ECO45</name>
<evidence type="ECO:0000255" key="1">
    <source>
        <dbReference type="HAMAP-Rule" id="MF_00570"/>
    </source>
</evidence>
<keyword id="KW-0436">Ligase</keyword>
<keyword id="KW-0597">Phosphoprotein</keyword>
<keyword id="KW-0662">Pyridine nucleotide biosynthesis</keyword>
<keyword id="KW-1185">Reference proteome</keyword>